<reference key="1">
    <citation type="journal article" date="1988" name="Nature">
        <title>Comparison of simian immunodeficiency virus isolates.</title>
        <authorList>
            <person name="Kestler H.W."/>
            <person name="Li Y."/>
            <person name="Naidu Y.M."/>
            <person name="Butler C.V."/>
            <person name="Ochs M.F."/>
            <person name="Jaenel G."/>
            <person name="King N.W."/>
            <person name="Daniel M.D."/>
            <person name="Desrosiers R.C."/>
        </authorList>
    </citation>
    <scope>NUCLEOTIDE SEQUENCE [GENOMIC DNA]</scope>
</reference>
<dbReference type="EMBL" id="M19499">
    <property type="protein sequence ID" value="AAB59911.1"/>
    <property type="molecule type" value="Genomic_RNA"/>
</dbReference>
<dbReference type="EMBL" id="X06879">
    <property type="status" value="NOT_ANNOTATED_CDS"/>
    <property type="molecule type" value="Genomic_DNA"/>
</dbReference>
<dbReference type="SMR" id="P69733"/>
<dbReference type="Proteomes" id="UP000258290">
    <property type="component" value="Segment"/>
</dbReference>
<dbReference type="GO" id="GO:0030430">
    <property type="term" value="C:host cell cytoplasm"/>
    <property type="evidence" value="ECO:0007669"/>
    <property type="project" value="UniProtKB-SubCell"/>
</dbReference>
<dbReference type="GO" id="GO:0044196">
    <property type="term" value="C:host cell nucleolus"/>
    <property type="evidence" value="ECO:0007669"/>
    <property type="project" value="UniProtKB-SubCell"/>
</dbReference>
<dbReference type="GO" id="GO:0003700">
    <property type="term" value="F:DNA-binding transcription factor activity"/>
    <property type="evidence" value="ECO:0007669"/>
    <property type="project" value="InterPro"/>
</dbReference>
<dbReference type="GO" id="GO:0003723">
    <property type="term" value="F:RNA binding"/>
    <property type="evidence" value="ECO:0007669"/>
    <property type="project" value="UniProtKB-KW"/>
</dbReference>
<dbReference type="GO" id="GO:0051028">
    <property type="term" value="P:mRNA transport"/>
    <property type="evidence" value="ECO:0007669"/>
    <property type="project" value="UniProtKB-KW"/>
</dbReference>
<dbReference type="Gene3D" id="6.10.140.630">
    <property type="match status" value="1"/>
</dbReference>
<dbReference type="InterPro" id="IPR000625">
    <property type="entry name" value="REV_protein"/>
</dbReference>
<dbReference type="Pfam" id="PF00424">
    <property type="entry name" value="REV"/>
    <property type="match status" value="1"/>
</dbReference>
<accession>P69733</accession>
<accession>P05874</accession>
<accession>P08809</accession>
<accession>P11264</accession>
<protein>
    <recommendedName>
        <fullName>Protein Rev</fullName>
    </recommendedName>
    <alternativeName>
        <fullName>Regulator of expression of viral proteins</fullName>
    </alternativeName>
</protein>
<feature type="chain" id="PRO_0000085299" description="Protein Rev">
    <location>
        <begin position="1"/>
        <end position="108"/>
    </location>
</feature>
<feature type="region of interest" description="Homomultimerization" evidence="1">
    <location>
        <begin position="16"/>
        <end position="25"/>
    </location>
</feature>
<feature type="region of interest" description="Disordered" evidence="2">
    <location>
        <begin position="83"/>
        <end position="108"/>
    </location>
</feature>
<feature type="short sequence motif" description="Nuclear localization signal and RNA-binding (RRE)" evidence="1">
    <location>
        <begin position="33"/>
        <end position="49"/>
    </location>
</feature>
<feature type="short sequence motif" description="Nuclear export signal" evidence="1">
    <location>
        <begin position="70"/>
        <end position="82"/>
    </location>
</feature>
<evidence type="ECO:0000250" key="1"/>
<evidence type="ECO:0000256" key="2">
    <source>
        <dbReference type="SAM" id="MobiDB-lite"/>
    </source>
</evidence>
<comment type="function">
    <text evidence="1">Escorts unspliced or incompletely spliced viral pre-mRNAs (late transcripts) out of the nucleus of infected cells. These pre-mRNAs carry a recognition sequence called Rev responsive element (RRE) located in the env gene, that is not present in fully spliced viral mRNAs (early transcripts). This function is essential since most viral proteins are translated from unspliced or partially spliced pre-mRNAs which cannot exit the nucleus by the pathway used by fully processed cellular mRNAs (By similarity).</text>
</comment>
<comment type="subunit">
    <text evidence="1">Homomultimer; when bound to the RRE. Multimeric assembly is essential for activity (By similarity).</text>
</comment>
<comment type="subcellular location">
    <subcellularLocation>
        <location>Host nucleus</location>
        <location>Host nucleolus</location>
    </subcellularLocation>
    <subcellularLocation>
        <location>Host cytoplasm</location>
    </subcellularLocation>
    <text evidence="1">The presence of both nuclear import and nuclear export signals leads to continuous shuttling between the nucleus and cytoplasm.</text>
</comment>
<comment type="domain">
    <text evidence="1">The RNA-binding motif binds to the RRE, a stem-and-loop structure present in incompletely spliced viral pre-mRNAs. This region also contains the NLS which mediates nuclear localization. These overlapping functions prevent Rev bound to RRE from undesirable return to the nucleus. When Rev binds the RRE, the NLS becomes masked while the NES remains accessible (By similarity).</text>
</comment>
<organism>
    <name type="scientific">Simian immunodeficiency virus (isolate Mm251)</name>
    <name type="common">SIV-mac</name>
    <name type="synonym">Simian immunodeficiency virus rhesus monkey</name>
    <dbReference type="NCBI Taxonomy" id="11734"/>
    <lineage>
        <taxon>Viruses</taxon>
        <taxon>Riboviria</taxon>
        <taxon>Pararnavirae</taxon>
        <taxon>Artverviricota</taxon>
        <taxon>Revtraviricetes</taxon>
        <taxon>Ortervirales</taxon>
        <taxon>Retroviridae</taxon>
        <taxon>Orthoretrovirinae</taxon>
        <taxon>Lentivirus</taxon>
        <taxon>Simian immunodeficiency virus</taxon>
    </lineage>
</organism>
<gene>
    <name type="primary">rev</name>
</gene>
<proteinExistence type="inferred from homology"/>
<keyword id="KW-1035">Host cytoplasm</keyword>
<keyword id="KW-1048">Host nucleus</keyword>
<keyword id="KW-0509">mRNA transport</keyword>
<keyword id="KW-0694">RNA-binding</keyword>
<keyword id="KW-0813">Transport</keyword>
<name>REV_SIVM2</name>
<sequence length="108" mass="12631">MSSHEREEELRKRLRLIHLLHQTIDSYPTGPGTANQRRQRRRRWRRRWQQLLALADRIYSFPDPPTDTPLDLAIQQLQNLAIESIPDPPTNTPEALCDPTKGSRSPQD</sequence>
<organismHost>
    <name type="scientific">Cercopithecidae</name>
    <name type="common">Old World monkeys</name>
    <dbReference type="NCBI Taxonomy" id="9527"/>
</organismHost>